<name>Y1235_THET2</name>
<keyword id="KW-0963">Cytoplasm</keyword>
<keyword id="KW-0238">DNA-binding</keyword>
<reference key="1">
    <citation type="journal article" date="2004" name="Nat. Biotechnol.">
        <title>The genome sequence of the extreme thermophile Thermus thermophilus.</title>
        <authorList>
            <person name="Henne A."/>
            <person name="Brueggemann H."/>
            <person name="Raasch C."/>
            <person name="Wiezer A."/>
            <person name="Hartsch T."/>
            <person name="Liesegang H."/>
            <person name="Johann A."/>
            <person name="Lienard T."/>
            <person name="Gohl O."/>
            <person name="Martinez-Arias R."/>
            <person name="Jacobi C."/>
            <person name="Starkuviene V."/>
            <person name="Schlenczeck S."/>
            <person name="Dencker S."/>
            <person name="Huber R."/>
            <person name="Klenk H.-P."/>
            <person name="Kramer W."/>
            <person name="Merkl R."/>
            <person name="Gottschalk G."/>
            <person name="Fritz H.-J."/>
        </authorList>
    </citation>
    <scope>NUCLEOTIDE SEQUENCE [LARGE SCALE GENOMIC DNA]</scope>
    <source>
        <strain>ATCC BAA-163 / DSM 7039 / HB27</strain>
    </source>
</reference>
<protein>
    <recommendedName>
        <fullName evidence="1">Nucleoid-associated protein TT_C1235</fullName>
    </recommendedName>
</protein>
<proteinExistence type="inferred from homology"/>
<sequence>MNFQKLLKEAQKAQKKAAEVQERLERMTVVGSAQGLVEVEANGHGKILALRLKPEALKAFQDDPEGLEDLLLVAIQDAQTKAHELSEKEMAKELGGVGQMLGKLF</sequence>
<evidence type="ECO:0000255" key="1">
    <source>
        <dbReference type="HAMAP-Rule" id="MF_00274"/>
    </source>
</evidence>
<feature type="chain" id="PRO_1000003862" description="Nucleoid-associated protein TT_C1235">
    <location>
        <begin position="1"/>
        <end position="105"/>
    </location>
</feature>
<gene>
    <name type="ordered locus">TT_C1235</name>
</gene>
<dbReference type="EMBL" id="AE017221">
    <property type="protein sequence ID" value="AAS81577.1"/>
    <property type="molecule type" value="Genomic_DNA"/>
</dbReference>
<dbReference type="RefSeq" id="WP_008633232.1">
    <property type="nucleotide sequence ID" value="NC_005835.1"/>
</dbReference>
<dbReference type="SMR" id="Q72I97"/>
<dbReference type="GeneID" id="3169320"/>
<dbReference type="KEGG" id="tth:TT_C1235"/>
<dbReference type="eggNOG" id="COG0718">
    <property type="taxonomic scope" value="Bacteria"/>
</dbReference>
<dbReference type="HOGENOM" id="CLU_140930_2_2_0"/>
<dbReference type="OrthoDB" id="33094at2"/>
<dbReference type="Proteomes" id="UP000000592">
    <property type="component" value="Chromosome"/>
</dbReference>
<dbReference type="GO" id="GO:0043590">
    <property type="term" value="C:bacterial nucleoid"/>
    <property type="evidence" value="ECO:0007669"/>
    <property type="project" value="UniProtKB-UniRule"/>
</dbReference>
<dbReference type="GO" id="GO:0005829">
    <property type="term" value="C:cytosol"/>
    <property type="evidence" value="ECO:0007669"/>
    <property type="project" value="TreeGrafter"/>
</dbReference>
<dbReference type="GO" id="GO:0003677">
    <property type="term" value="F:DNA binding"/>
    <property type="evidence" value="ECO:0007669"/>
    <property type="project" value="UniProtKB-UniRule"/>
</dbReference>
<dbReference type="Gene3D" id="3.30.1310.10">
    <property type="entry name" value="Nucleoid-associated protein YbaB-like domain"/>
    <property type="match status" value="1"/>
</dbReference>
<dbReference type="HAMAP" id="MF_00274">
    <property type="entry name" value="DNA_YbaB_EbfC"/>
    <property type="match status" value="1"/>
</dbReference>
<dbReference type="InterPro" id="IPR036894">
    <property type="entry name" value="YbaB-like_sf"/>
</dbReference>
<dbReference type="InterPro" id="IPR004401">
    <property type="entry name" value="YbaB/EbfC"/>
</dbReference>
<dbReference type="NCBIfam" id="TIGR00103">
    <property type="entry name" value="DNA_YbaB_EbfC"/>
    <property type="match status" value="1"/>
</dbReference>
<dbReference type="PANTHER" id="PTHR33449">
    <property type="entry name" value="NUCLEOID-ASSOCIATED PROTEIN YBAB"/>
    <property type="match status" value="1"/>
</dbReference>
<dbReference type="PANTHER" id="PTHR33449:SF1">
    <property type="entry name" value="NUCLEOID-ASSOCIATED PROTEIN YBAB"/>
    <property type="match status" value="1"/>
</dbReference>
<dbReference type="Pfam" id="PF02575">
    <property type="entry name" value="YbaB_DNA_bd"/>
    <property type="match status" value="1"/>
</dbReference>
<dbReference type="PIRSF" id="PIRSF004555">
    <property type="entry name" value="UCP004555"/>
    <property type="match status" value="1"/>
</dbReference>
<dbReference type="SUPFAM" id="SSF82607">
    <property type="entry name" value="YbaB-like"/>
    <property type="match status" value="1"/>
</dbReference>
<comment type="function">
    <text evidence="1">Binds to DNA and alters its conformation. May be involved in regulation of gene expression, nucleoid organization and DNA protection.</text>
</comment>
<comment type="subunit">
    <text evidence="1">Homodimer.</text>
</comment>
<comment type="subcellular location">
    <subcellularLocation>
        <location evidence="1">Cytoplasm</location>
        <location evidence="1">Nucleoid</location>
    </subcellularLocation>
</comment>
<comment type="similarity">
    <text evidence="1">Belongs to the YbaB/EbfC family.</text>
</comment>
<accession>Q72I97</accession>
<organism>
    <name type="scientific">Thermus thermophilus (strain ATCC BAA-163 / DSM 7039 / HB27)</name>
    <dbReference type="NCBI Taxonomy" id="262724"/>
    <lineage>
        <taxon>Bacteria</taxon>
        <taxon>Thermotogati</taxon>
        <taxon>Deinococcota</taxon>
        <taxon>Deinococci</taxon>
        <taxon>Thermales</taxon>
        <taxon>Thermaceae</taxon>
        <taxon>Thermus</taxon>
    </lineage>
</organism>